<reference key="1">
    <citation type="journal article" date="2000" name="Allergy">
        <title>PCR-based cloning, isolation, and IgE-binding properties of recombinant latex profilin (rHev b 8).</title>
        <authorList>
            <person name="Rihs H.-P."/>
            <person name="Chen Z."/>
            <person name="Rozynek P."/>
            <person name="Baur X."/>
            <person name="Lundberg M."/>
            <person name="Cremer R."/>
        </authorList>
    </citation>
    <scope>NUCLEOTIDE SEQUENCE [MRNA]</scope>
    <scope>ALLERGEN</scope>
    <source>
        <strain>cv. RRIM 600</strain>
        <tissue>Leaf</tissue>
    </source>
</reference>
<reference key="2">
    <citation type="journal article" date="2016" name="Sci. Rep.">
        <title>Structural insights into the IgE mediated responses induced by the allergens Hev b 8 and Zea m 12 in their dimeric forms.</title>
        <authorList>
            <person name="Mares-Mejia I."/>
            <person name="Martinez-Caballero S."/>
            <person name="Garay-Canales C."/>
            <person name="Cano-Sanchez P."/>
            <person name="Torres-Larios A."/>
            <person name="Lara-Gonzalez S."/>
            <person name="Ortega E."/>
            <person name="Rodriguez-Romero A."/>
        </authorList>
    </citation>
    <scope>X-RAY CRYSTALLOGRAPHY (1.90 ANGSTROMS)</scope>
    <scope>DISULFIDE BONDS</scope>
    <scope>ALLERGEN</scope>
</reference>
<feature type="initiator methionine" description="Removed" evidence="1">
    <location>
        <position position="1"/>
    </location>
</feature>
<feature type="chain" id="PRO_0000199634" description="Profilin-2">
    <location>
        <begin position="2"/>
        <end position="131"/>
    </location>
</feature>
<feature type="short sequence motif" description="Involved in PIP2 interaction" evidence="3">
    <location>
        <begin position="81"/>
        <end position="97"/>
    </location>
</feature>
<feature type="modified residue" description="Phosphothreonine" evidence="5">
    <location>
        <position position="111"/>
    </location>
</feature>
<feature type="disulfide bond" evidence="2">
    <location>
        <begin position="13"/>
        <end position="115"/>
    </location>
</feature>
<feature type="disulfide bond" description="Interchain" evidence="7 10">
    <location>
        <position position="13"/>
    </location>
</feature>
<feature type="helix" evidence="11">
    <location>
        <begin position="3"/>
        <end position="10"/>
    </location>
</feature>
<feature type="strand" evidence="11">
    <location>
        <begin position="21"/>
        <end position="27"/>
    </location>
</feature>
<feature type="strand" evidence="11">
    <location>
        <begin position="32"/>
        <end position="35"/>
    </location>
</feature>
<feature type="helix" evidence="11">
    <location>
        <begin position="46"/>
        <end position="55"/>
    </location>
</feature>
<feature type="turn" evidence="12">
    <location>
        <begin position="57"/>
        <end position="59"/>
    </location>
</feature>
<feature type="turn" evidence="11">
    <location>
        <begin position="61"/>
        <end position="63"/>
    </location>
</feature>
<feature type="strand" evidence="11">
    <location>
        <begin position="65"/>
        <end position="67"/>
    </location>
</feature>
<feature type="strand" evidence="11">
    <location>
        <begin position="70"/>
        <end position="78"/>
    </location>
</feature>
<feature type="turn" evidence="11">
    <location>
        <begin position="79"/>
        <end position="81"/>
    </location>
</feature>
<feature type="strand" evidence="11">
    <location>
        <begin position="82"/>
        <end position="87"/>
    </location>
</feature>
<feature type="strand" evidence="11">
    <location>
        <begin position="90"/>
        <end position="96"/>
    </location>
</feature>
<feature type="strand" evidence="11">
    <location>
        <begin position="98"/>
        <end position="106"/>
    </location>
</feature>
<feature type="helix" evidence="11">
    <location>
        <begin position="112"/>
        <end position="127"/>
    </location>
</feature>
<feature type="turn" evidence="11">
    <location>
        <begin position="128"/>
        <end position="130"/>
    </location>
</feature>
<sequence>MSWQAYVDDHLMCEIEGNHLSAAAIIGQDGSVWAQSANFPQFKSEEITGIMSDFHEPGTLAPTGLYIGGTKYMVIQGEPGAVIRGKKGPGGVTVKKTNQALIIGIYDEPMTPGQCNMIVERLGDYLIDQGY</sequence>
<gene>
    <name evidence="8" type="primary">PRO2</name>
</gene>
<accession>Q9STB6</accession>
<proteinExistence type="evidence at protein level"/>
<keyword id="KW-0002">3D-structure</keyword>
<keyword id="KW-0009">Actin-binding</keyword>
<keyword id="KW-0020">Allergen</keyword>
<keyword id="KW-0963">Cytoplasm</keyword>
<keyword id="KW-0206">Cytoskeleton</keyword>
<keyword id="KW-1015">Disulfide bond</keyword>
<keyword id="KW-0597">Phosphoprotein</keyword>
<name>PROF2_HEVBR</name>
<comment type="function">
    <text evidence="4">Binds to actin and affects the structure of the cytoskeleton. At high concentrations, profilin prevents the polymerization of actin, whereas it enhances it at low concentrations. By binding to PIP2, it inhibits the formation of IP3 and DG.</text>
</comment>
<comment type="subunit">
    <text evidence="3 7">Multimer (PubMed:27586352). Occurs in many kinds of cells as a complex with monomeric actin in a 1:1 ratio (By similarity).</text>
</comment>
<comment type="subcellular location">
    <subcellularLocation>
        <location evidence="3">Cytoplasm</location>
        <location evidence="3">Cytoskeleton</location>
    </subcellularLocation>
</comment>
<comment type="PTM">
    <text evidence="3">Phosphorylated by MAP kinases.</text>
</comment>
<comment type="allergen">
    <text evidence="6 7">Causes an allergic reaction in human. Involved in latex allergic reactions (PubMed:10955696). Dimerization considerably increases the IgE-mediated degranulation in rat basophilic leukemia cells (PubMed:27586352).</text>
</comment>
<comment type="similarity">
    <text evidence="9">Belongs to the profilin family.</text>
</comment>
<organism>
    <name type="scientific">Hevea brasiliensis</name>
    <name type="common">Para rubber tree</name>
    <name type="synonym">Siphonia brasiliensis</name>
    <dbReference type="NCBI Taxonomy" id="3981"/>
    <lineage>
        <taxon>Eukaryota</taxon>
        <taxon>Viridiplantae</taxon>
        <taxon>Streptophyta</taxon>
        <taxon>Embryophyta</taxon>
        <taxon>Tracheophyta</taxon>
        <taxon>Spermatophyta</taxon>
        <taxon>Magnoliopsida</taxon>
        <taxon>eudicotyledons</taxon>
        <taxon>Gunneridae</taxon>
        <taxon>Pentapetalae</taxon>
        <taxon>rosids</taxon>
        <taxon>fabids</taxon>
        <taxon>Malpighiales</taxon>
        <taxon>Euphorbiaceae</taxon>
        <taxon>Crotonoideae</taxon>
        <taxon>Micrandreae</taxon>
        <taxon>Hevea</taxon>
    </lineage>
</organism>
<protein>
    <recommendedName>
        <fullName evidence="8">Profilin-2</fullName>
    </recommendedName>
    <alternativeName>
        <fullName evidence="8">Pollen allergen Hev b 8.0102</fullName>
    </alternativeName>
    <allergenName evidence="8">Hev b 8.0102</allergenName>
</protein>
<dbReference type="EMBL" id="AJ132397">
    <property type="protein sequence ID" value="CAB51914.1"/>
    <property type="molecule type" value="mRNA"/>
</dbReference>
<dbReference type="PDB" id="5FDS">
    <property type="method" value="X-ray"/>
    <property type="resolution" value="1.90 A"/>
    <property type="chains" value="A=1-131"/>
</dbReference>
<dbReference type="PDB" id="5FEG">
    <property type="method" value="X-ray"/>
    <property type="resolution" value="2.80 A"/>
    <property type="chains" value="A/B=1-131"/>
</dbReference>
<dbReference type="PDB" id="7SBD">
    <property type="method" value="X-ray"/>
    <property type="resolution" value="3.04 A"/>
    <property type="chains" value="C=1-131"/>
</dbReference>
<dbReference type="PDB" id="7SBG">
    <property type="method" value="X-ray"/>
    <property type="resolution" value="3.34 A"/>
    <property type="chains" value="C=1-131"/>
</dbReference>
<dbReference type="PDBsum" id="5FDS"/>
<dbReference type="PDBsum" id="5FEG"/>
<dbReference type="PDBsum" id="7SBD"/>
<dbReference type="PDBsum" id="7SBG"/>
<dbReference type="SMR" id="Q9STB6"/>
<dbReference type="Allergome" id="397">
    <property type="allergen name" value="Hev b 8"/>
</dbReference>
<dbReference type="Allergome" id="399">
    <property type="allergen name" value="Hev b 8.0102"/>
</dbReference>
<dbReference type="GO" id="GO:0005938">
    <property type="term" value="C:cell cortex"/>
    <property type="evidence" value="ECO:0007669"/>
    <property type="project" value="TreeGrafter"/>
</dbReference>
<dbReference type="GO" id="GO:0005856">
    <property type="term" value="C:cytoskeleton"/>
    <property type="evidence" value="ECO:0007669"/>
    <property type="project" value="UniProtKB-SubCell"/>
</dbReference>
<dbReference type="GO" id="GO:0003785">
    <property type="term" value="F:actin monomer binding"/>
    <property type="evidence" value="ECO:0007669"/>
    <property type="project" value="TreeGrafter"/>
</dbReference>
<dbReference type="CDD" id="cd00148">
    <property type="entry name" value="PROF"/>
    <property type="match status" value="1"/>
</dbReference>
<dbReference type="FunFam" id="3.30.450.30:FF:000001">
    <property type="entry name" value="Profilin"/>
    <property type="match status" value="1"/>
</dbReference>
<dbReference type="Gene3D" id="3.30.450.30">
    <property type="entry name" value="Dynein light chain 2a, cytoplasmic"/>
    <property type="match status" value="1"/>
</dbReference>
<dbReference type="InterPro" id="IPR048278">
    <property type="entry name" value="PFN"/>
</dbReference>
<dbReference type="InterPro" id="IPR005455">
    <property type="entry name" value="PFN_euk"/>
</dbReference>
<dbReference type="InterPro" id="IPR036140">
    <property type="entry name" value="PFN_sf"/>
</dbReference>
<dbReference type="InterPro" id="IPR027310">
    <property type="entry name" value="Profilin_CS"/>
</dbReference>
<dbReference type="PANTHER" id="PTHR11604">
    <property type="entry name" value="PROFILIN"/>
    <property type="match status" value="1"/>
</dbReference>
<dbReference type="PANTHER" id="PTHR11604:SF49">
    <property type="entry name" value="PROFILIN-2"/>
    <property type="match status" value="1"/>
</dbReference>
<dbReference type="Pfam" id="PF00235">
    <property type="entry name" value="Profilin"/>
    <property type="match status" value="1"/>
</dbReference>
<dbReference type="PRINTS" id="PR00392">
    <property type="entry name" value="PROFILIN"/>
</dbReference>
<dbReference type="PRINTS" id="PR01640">
    <property type="entry name" value="PROFILINPLNT"/>
</dbReference>
<dbReference type="SMART" id="SM00392">
    <property type="entry name" value="PROF"/>
    <property type="match status" value="1"/>
</dbReference>
<dbReference type="SUPFAM" id="SSF55770">
    <property type="entry name" value="Profilin (actin-binding protein)"/>
    <property type="match status" value="1"/>
</dbReference>
<dbReference type="PROSITE" id="PS00414">
    <property type="entry name" value="PROFILIN"/>
    <property type="match status" value="1"/>
</dbReference>
<evidence type="ECO:0000250" key="1"/>
<evidence type="ECO:0000250" key="2">
    <source>
        <dbReference type="UniProtKB" id="A4GDU3"/>
    </source>
</evidence>
<evidence type="ECO:0000250" key="3">
    <source>
        <dbReference type="UniProtKB" id="P35081"/>
    </source>
</evidence>
<evidence type="ECO:0000250" key="4">
    <source>
        <dbReference type="UniProtKB" id="Q9FR39"/>
    </source>
</evidence>
<evidence type="ECO:0000250" key="5">
    <source>
        <dbReference type="UniProtKB" id="Q9ST99"/>
    </source>
</evidence>
<evidence type="ECO:0000269" key="6">
    <source>
    </source>
</evidence>
<evidence type="ECO:0000269" key="7">
    <source>
    </source>
</evidence>
<evidence type="ECO:0000303" key="8">
    <source>
    </source>
</evidence>
<evidence type="ECO:0000305" key="9"/>
<evidence type="ECO:0007744" key="10">
    <source>
        <dbReference type="PDB" id="5FEG"/>
    </source>
</evidence>
<evidence type="ECO:0007829" key="11">
    <source>
        <dbReference type="PDB" id="5FDS"/>
    </source>
</evidence>
<evidence type="ECO:0007829" key="12">
    <source>
        <dbReference type="PDB" id="5FEG"/>
    </source>
</evidence>